<protein>
    <recommendedName>
        <fullName>Uncharacterized protein Mb1547</fullName>
    </recommendedName>
</protein>
<sequence>MSIVSISYNQEEYIREALDGFAAQRTEFPVEVIIADDASTDATPRIIGEYAARYPQLFRPILRQTNIGVHANFKDVLSAARGEYLALCEGDDYWTDPLKLSKQVKYLDRHPETTVCFHPVRVIYEDGAKDSEFPPLSWRRDLSVDALLARNFIQTNSVVYRRQPSYDDIPANVMPIDWYLHVRHAVGGEIAMLPETMAVYRRHAHGIWHSAYTDRRKFWETRGHGMAATLEAMLDLVHGHREREAIVGEVSAWVLREIGKTPGRQGRALLLKSIADHPRMTMLSLQHRWAQTPWRRFKRRLSTELSSLAALAYATRRRALEGRDGGYRETTSPPTGRGRNVRGSHA</sequence>
<reference key="1">
    <citation type="journal article" date="2003" name="Proc. Natl. Acad. Sci. U.S.A.">
        <title>The complete genome sequence of Mycobacterium bovis.</title>
        <authorList>
            <person name="Garnier T."/>
            <person name="Eiglmeier K."/>
            <person name="Camus J.-C."/>
            <person name="Medina N."/>
            <person name="Mansoor H."/>
            <person name="Pryor M."/>
            <person name="Duthoy S."/>
            <person name="Grondin S."/>
            <person name="Lacroix C."/>
            <person name="Monsempe C."/>
            <person name="Simon S."/>
            <person name="Harris B."/>
            <person name="Atkin R."/>
            <person name="Doggett J."/>
            <person name="Mayes R."/>
            <person name="Keating L."/>
            <person name="Wheeler P.R."/>
            <person name="Parkhill J."/>
            <person name="Barrell B.G."/>
            <person name="Cole S.T."/>
            <person name="Gordon S.V."/>
            <person name="Hewinson R.G."/>
        </authorList>
    </citation>
    <scope>NUCLEOTIDE SEQUENCE [LARGE SCALE GENOMIC DNA]</scope>
    <source>
        <strain>ATCC BAA-935 / AF2122/97</strain>
    </source>
</reference>
<reference key="2">
    <citation type="journal article" date="2017" name="Genome Announc.">
        <title>Updated reference genome sequence and annotation of Mycobacterium bovis AF2122/97.</title>
        <authorList>
            <person name="Malone K.M."/>
            <person name="Farrell D."/>
            <person name="Stuber T.P."/>
            <person name="Schubert O.T."/>
            <person name="Aebersold R."/>
            <person name="Robbe-Austerman S."/>
            <person name="Gordon S.V."/>
        </authorList>
    </citation>
    <scope>NUCLEOTIDE SEQUENCE [LARGE SCALE GENOMIC DNA]</scope>
    <scope>GENOME REANNOTATION</scope>
    <source>
        <strain>ATCC BAA-935 / AF2122/97</strain>
    </source>
</reference>
<feature type="chain" id="PRO_0000103869" description="Uncharacterized protein Mb1547">
    <location>
        <begin position="1"/>
        <end position="346"/>
    </location>
</feature>
<feature type="region of interest" description="Disordered" evidence="1">
    <location>
        <begin position="322"/>
        <end position="346"/>
    </location>
</feature>
<accession>P64864</accession>
<accession>A0A1R3XYK7</accession>
<accession>Q50587</accession>
<accession>X2BIL2</accession>
<proteinExistence type="predicted"/>
<dbReference type="EMBL" id="LT708304">
    <property type="protein sequence ID" value="SIU00150.1"/>
    <property type="molecule type" value="Genomic_DNA"/>
</dbReference>
<dbReference type="RefSeq" id="NP_855199.1">
    <property type="nucleotide sequence ID" value="NC_002945.3"/>
</dbReference>
<dbReference type="RefSeq" id="WP_003407657.1">
    <property type="nucleotide sequence ID" value="NC_002945.4"/>
</dbReference>
<dbReference type="SMR" id="P64864"/>
<dbReference type="KEGG" id="mbo:BQ2027_MB1547"/>
<dbReference type="PATRIC" id="fig|233413.5.peg.1690"/>
<dbReference type="Proteomes" id="UP000001419">
    <property type="component" value="Chromosome"/>
</dbReference>
<dbReference type="GO" id="GO:0016758">
    <property type="term" value="F:hexosyltransferase activity"/>
    <property type="evidence" value="ECO:0007669"/>
    <property type="project" value="UniProtKB-ARBA"/>
</dbReference>
<dbReference type="GO" id="GO:0009058">
    <property type="term" value="P:biosynthetic process"/>
    <property type="evidence" value="ECO:0007669"/>
    <property type="project" value="UniProtKB-ARBA"/>
</dbReference>
<dbReference type="FunFam" id="3.90.550.10:FF:000166">
    <property type="entry name" value="Probable sugar transferase"/>
    <property type="match status" value="1"/>
</dbReference>
<dbReference type="Gene3D" id="3.90.550.10">
    <property type="entry name" value="Spore Coat Polysaccharide Biosynthesis Protein SpsA, Chain A"/>
    <property type="match status" value="1"/>
</dbReference>
<dbReference type="InterPro" id="IPR001173">
    <property type="entry name" value="Glyco_trans_2-like"/>
</dbReference>
<dbReference type="InterPro" id="IPR029044">
    <property type="entry name" value="Nucleotide-diphossugar_trans"/>
</dbReference>
<dbReference type="PANTHER" id="PTHR22916">
    <property type="entry name" value="GLYCOSYLTRANSFERASE"/>
    <property type="match status" value="1"/>
</dbReference>
<dbReference type="PANTHER" id="PTHR22916:SF3">
    <property type="entry name" value="UDP-GLCNAC:BETAGAL BETA-1,3-N-ACETYLGLUCOSAMINYLTRANSFERASE-LIKE PROTEIN 1"/>
    <property type="match status" value="1"/>
</dbReference>
<dbReference type="Pfam" id="PF00535">
    <property type="entry name" value="Glycos_transf_2"/>
    <property type="match status" value="1"/>
</dbReference>
<dbReference type="SUPFAM" id="SSF53448">
    <property type="entry name" value="Nucleotide-diphospho-sugar transferases"/>
    <property type="match status" value="1"/>
</dbReference>
<gene>
    <name type="ordered locus">BQ2027_MB1547</name>
</gene>
<name>Y1547_MYCBO</name>
<evidence type="ECO:0000256" key="1">
    <source>
        <dbReference type="SAM" id="MobiDB-lite"/>
    </source>
</evidence>
<keyword id="KW-1185">Reference proteome</keyword>
<organism>
    <name type="scientific">Mycobacterium bovis (strain ATCC BAA-935 / AF2122/97)</name>
    <dbReference type="NCBI Taxonomy" id="233413"/>
    <lineage>
        <taxon>Bacteria</taxon>
        <taxon>Bacillati</taxon>
        <taxon>Actinomycetota</taxon>
        <taxon>Actinomycetes</taxon>
        <taxon>Mycobacteriales</taxon>
        <taxon>Mycobacteriaceae</taxon>
        <taxon>Mycobacterium</taxon>
        <taxon>Mycobacterium tuberculosis complex</taxon>
    </lineage>
</organism>